<accession>Q32L35</accession>
<comment type="function">
    <text evidence="2">Component of the MICOS complex, a large protein complex of the mitochondrial inner membrane that plays crucial roles in the maintenance of crista junctions, inner membrane architecture, and formation of contact sites to the outer membrane.</text>
</comment>
<comment type="subunit">
    <text evidence="2">Component of the mitochondrial contact site and cristae organizing system (MICOS) complex, composed of at least MICOS10/MIC10, CHCHD3/MIC19, CHCHD6/MIC25, APOOL/MIC27, IMMT/MIC60, APOO/MIC23/MIC26 and MICOS13/MIC13. This complex was also known under the names MINOS or MitOS complex. The MICOS complex associates with mitochondrial outer membrane proteins SAMM50, MTX1 and MTX2 (together described as components of the mitochondrial outer membrane sorting assembly machinery (SAM) complex) and DNAJC11, mitochondrial inner membrane protein TMEM11 and with HSPA9. The MICOS and SAM complexes together with DNAJC11 are part of a large protein complex spanning both membranes termed the mitochondrial intermembrane space bridging (MIB) complex. Interacts with DISC1. Interacts with IMMT/MIC60.</text>
</comment>
<comment type="subcellular location">
    <subcellularLocation>
        <location evidence="2">Mitochondrion inner membrane</location>
        <topology evidence="2">Lipid-anchor</topology>
    </subcellularLocation>
    <subcellularLocation>
        <location evidence="2">Mitochondrion</location>
    </subcellularLocation>
</comment>
<comment type="similarity">
    <text evidence="6">Belongs to the MICOS complex subunit Mic19 family. Metazoan Mic25 subfamily.</text>
</comment>
<name>MIC25_BOVIN</name>
<proteinExistence type="evidence at transcript level"/>
<gene>
    <name type="primary">CHCHD6</name>
    <name type="synonym">MIC25</name>
</gene>
<sequence>MGSAESREGRRASFGMDEEERVRVLQGIRLSENVVNRMKEPGQPSRVGLLAPPAAALGPSGGREKDSKPPRPDCGSGRGPPRVQVDPLERCDWEQAVLQDELVRVATTEREAAASPRSVTLRRGEGGVDQEKQRLAQRARELESQEEELRCRDAFYKEQLGRLERQNLEAYRLSSQQFHEAATKIEGAIKPRRVEPVCSGLQAQILRCYRDRLQEVLLCADLVRAYQHCVSSAHKG</sequence>
<dbReference type="EMBL" id="DAAA02054713">
    <property type="status" value="NOT_ANNOTATED_CDS"/>
    <property type="molecule type" value="Genomic_DNA"/>
</dbReference>
<dbReference type="EMBL" id="DAAA02054714">
    <property type="status" value="NOT_ANNOTATED_CDS"/>
    <property type="molecule type" value="Genomic_DNA"/>
</dbReference>
<dbReference type="EMBL" id="DAAA02054715">
    <property type="status" value="NOT_ANNOTATED_CDS"/>
    <property type="molecule type" value="Genomic_DNA"/>
</dbReference>
<dbReference type="EMBL" id="BC109788">
    <property type="protein sequence ID" value="AAI09789.1"/>
    <property type="molecule type" value="mRNA"/>
</dbReference>
<dbReference type="RefSeq" id="NP_001069870.1">
    <property type="nucleotide sequence ID" value="NM_001076402.2"/>
</dbReference>
<dbReference type="SMR" id="Q32L35"/>
<dbReference type="FunCoup" id="Q32L35">
    <property type="interactions" value="892"/>
</dbReference>
<dbReference type="STRING" id="9913.ENSBTAP00000058376"/>
<dbReference type="PaxDb" id="9913-ENSBTAP00000041190"/>
<dbReference type="GeneID" id="615934"/>
<dbReference type="KEGG" id="bta:615934"/>
<dbReference type="CTD" id="84303"/>
<dbReference type="eggNOG" id="KOG4083">
    <property type="taxonomic scope" value="Eukaryota"/>
</dbReference>
<dbReference type="HOGENOM" id="CLU_049040_0_0_1"/>
<dbReference type="InParanoid" id="Q32L35"/>
<dbReference type="OrthoDB" id="70030at2759"/>
<dbReference type="TreeFam" id="TF326279"/>
<dbReference type="Proteomes" id="UP000009136">
    <property type="component" value="Unplaced"/>
</dbReference>
<dbReference type="GO" id="GO:0061617">
    <property type="term" value="C:MICOS complex"/>
    <property type="evidence" value="ECO:0007669"/>
    <property type="project" value="InterPro"/>
</dbReference>
<dbReference type="GO" id="GO:0005743">
    <property type="term" value="C:mitochondrial inner membrane"/>
    <property type="evidence" value="ECO:0000250"/>
    <property type="project" value="UniProtKB"/>
</dbReference>
<dbReference type="GO" id="GO:0005739">
    <property type="term" value="C:mitochondrion"/>
    <property type="evidence" value="ECO:0000250"/>
    <property type="project" value="UniProtKB"/>
</dbReference>
<dbReference type="GO" id="GO:0042407">
    <property type="term" value="P:cristae formation"/>
    <property type="evidence" value="ECO:0000250"/>
    <property type="project" value="UniProtKB"/>
</dbReference>
<dbReference type="GO" id="GO:0006974">
    <property type="term" value="P:DNA damage response"/>
    <property type="evidence" value="ECO:0000250"/>
    <property type="project" value="UniProtKB"/>
</dbReference>
<dbReference type="InterPro" id="IPR007964">
    <property type="entry name" value="MIC19/MIC25"/>
</dbReference>
<dbReference type="InterPro" id="IPR042860">
    <property type="entry name" value="MIC25"/>
</dbReference>
<dbReference type="PANTHER" id="PTHR47609">
    <property type="entry name" value="MICOS COMPLEX SUBUNIT MIC25"/>
    <property type="match status" value="1"/>
</dbReference>
<dbReference type="PANTHER" id="PTHR47609:SF1">
    <property type="entry name" value="MICOS COMPLEX SUBUNIT MIC25"/>
    <property type="match status" value="1"/>
</dbReference>
<dbReference type="Pfam" id="PF05300">
    <property type="entry name" value="MIC19_MIC25"/>
    <property type="match status" value="1"/>
</dbReference>
<dbReference type="PROSITE" id="PS51808">
    <property type="entry name" value="CHCH"/>
    <property type="match status" value="1"/>
</dbReference>
<protein>
    <recommendedName>
        <fullName>MICOS complex subunit MIC25</fullName>
    </recommendedName>
    <alternativeName>
        <fullName>Coiled-coil-helix-coiled-coil-helix domain-containing protein 6</fullName>
    </alternativeName>
</protein>
<evidence type="ECO:0000250" key="1">
    <source>
        <dbReference type="UniProtKB" id="Q91VN4"/>
    </source>
</evidence>
<evidence type="ECO:0000250" key="2">
    <source>
        <dbReference type="UniProtKB" id="Q9BRQ6"/>
    </source>
</evidence>
<evidence type="ECO:0000255" key="3"/>
<evidence type="ECO:0000255" key="4">
    <source>
        <dbReference type="PROSITE-ProRule" id="PRU01150"/>
    </source>
</evidence>
<evidence type="ECO:0000256" key="5">
    <source>
        <dbReference type="SAM" id="MobiDB-lite"/>
    </source>
</evidence>
<evidence type="ECO:0000305" key="6"/>
<feature type="initiator methionine" description="Removed" evidence="3">
    <location>
        <position position="1"/>
    </location>
</feature>
<feature type="chain" id="PRO_0000416908" description="MICOS complex subunit MIC25">
    <location>
        <begin position="2"/>
        <end position="236"/>
    </location>
</feature>
<feature type="domain" description="CHCH" evidence="4">
    <location>
        <begin position="195"/>
        <end position="236"/>
    </location>
</feature>
<feature type="region of interest" description="Disordered" evidence="5">
    <location>
        <begin position="1"/>
        <end position="22"/>
    </location>
</feature>
<feature type="region of interest" description="Disordered" evidence="5">
    <location>
        <begin position="34"/>
        <end position="86"/>
    </location>
</feature>
<feature type="region of interest" description="Disordered" evidence="5">
    <location>
        <begin position="109"/>
        <end position="132"/>
    </location>
</feature>
<feature type="coiled-coil region" evidence="3">
    <location>
        <begin position="127"/>
        <end position="167"/>
    </location>
</feature>
<feature type="short sequence motif" description="Cx9C motif 1" evidence="4">
    <location>
        <begin position="198"/>
        <end position="208"/>
    </location>
</feature>
<feature type="short sequence motif" description="Cx9C motif 2" evidence="4">
    <location>
        <begin position="219"/>
        <end position="229"/>
    </location>
</feature>
<feature type="compositionally biased region" description="Basic and acidic residues" evidence="5">
    <location>
        <begin position="1"/>
        <end position="11"/>
    </location>
</feature>
<feature type="compositionally biased region" description="Low complexity" evidence="5">
    <location>
        <begin position="48"/>
        <end position="58"/>
    </location>
</feature>
<feature type="compositionally biased region" description="Basic and acidic residues" evidence="5">
    <location>
        <begin position="62"/>
        <end position="71"/>
    </location>
</feature>
<feature type="compositionally biased region" description="Basic and acidic residues" evidence="5">
    <location>
        <begin position="122"/>
        <end position="132"/>
    </location>
</feature>
<feature type="modified residue" description="Phosphoserine" evidence="2">
    <location>
        <position position="13"/>
    </location>
</feature>
<feature type="modified residue" description="Phosphoserine" evidence="1">
    <location>
        <position position="31"/>
    </location>
</feature>
<feature type="lipid moiety-binding region" description="N-myristoyl glycine" evidence="3">
    <location>
        <position position="2"/>
    </location>
</feature>
<feature type="disulfide bond" evidence="4">
    <location>
        <begin position="198"/>
        <end position="229"/>
    </location>
</feature>
<feature type="disulfide bond" evidence="4">
    <location>
        <begin position="208"/>
        <end position="219"/>
    </location>
</feature>
<organism>
    <name type="scientific">Bos taurus</name>
    <name type="common">Bovine</name>
    <dbReference type="NCBI Taxonomy" id="9913"/>
    <lineage>
        <taxon>Eukaryota</taxon>
        <taxon>Metazoa</taxon>
        <taxon>Chordata</taxon>
        <taxon>Craniata</taxon>
        <taxon>Vertebrata</taxon>
        <taxon>Euteleostomi</taxon>
        <taxon>Mammalia</taxon>
        <taxon>Eutheria</taxon>
        <taxon>Laurasiatheria</taxon>
        <taxon>Artiodactyla</taxon>
        <taxon>Ruminantia</taxon>
        <taxon>Pecora</taxon>
        <taxon>Bovidae</taxon>
        <taxon>Bovinae</taxon>
        <taxon>Bos</taxon>
    </lineage>
</organism>
<reference key="1">
    <citation type="journal article" date="2009" name="Genome Biol.">
        <title>A whole-genome assembly of the domestic cow, Bos taurus.</title>
        <authorList>
            <person name="Zimin A.V."/>
            <person name="Delcher A.L."/>
            <person name="Florea L."/>
            <person name="Kelley D.R."/>
            <person name="Schatz M.C."/>
            <person name="Puiu D."/>
            <person name="Hanrahan F."/>
            <person name="Pertea G."/>
            <person name="Van Tassell C.P."/>
            <person name="Sonstegard T.S."/>
            <person name="Marcais G."/>
            <person name="Roberts M."/>
            <person name="Subramanian P."/>
            <person name="Yorke J.A."/>
            <person name="Salzberg S.L."/>
        </authorList>
    </citation>
    <scope>NUCLEOTIDE SEQUENCE [LARGE SCALE GENOMIC DNA]</scope>
    <source>
        <strain>Hereford</strain>
    </source>
</reference>
<reference key="2">
    <citation type="submission" date="2005-11" db="EMBL/GenBank/DDBJ databases">
        <authorList>
            <consortium name="NIH - Mammalian Gene Collection (MGC) project"/>
        </authorList>
    </citation>
    <scope>NUCLEOTIDE SEQUENCE [LARGE SCALE MRNA]</scope>
    <source>
        <strain>Crossbred X Angus</strain>
        <tissue>Liver</tissue>
    </source>
</reference>
<keyword id="KW-0175">Coiled coil</keyword>
<keyword id="KW-1015">Disulfide bond</keyword>
<keyword id="KW-0449">Lipoprotein</keyword>
<keyword id="KW-0472">Membrane</keyword>
<keyword id="KW-0496">Mitochondrion</keyword>
<keyword id="KW-0999">Mitochondrion inner membrane</keyword>
<keyword id="KW-0519">Myristate</keyword>
<keyword id="KW-0597">Phosphoprotein</keyword>
<keyword id="KW-1185">Reference proteome</keyword>